<accession>C6EHJ8</accession>
<accession>C5W2W8</accession>
<evidence type="ECO:0000255" key="1">
    <source>
        <dbReference type="HAMAP-Rule" id="MF_00832"/>
    </source>
</evidence>
<keyword id="KW-0378">Hydrolase</keyword>
<comment type="function">
    <text evidence="1">Involved in pyrimidine catabolism. May facilitate the hydrolysis of carbamate, a reaction that can also occur spontaneously.</text>
</comment>
<comment type="catalytic activity">
    <reaction evidence="1">
        <text>carbamate + 2 H(+) = NH4(+) + CO2</text>
        <dbReference type="Rhea" id="RHEA:15649"/>
        <dbReference type="ChEBI" id="CHEBI:13941"/>
        <dbReference type="ChEBI" id="CHEBI:15378"/>
        <dbReference type="ChEBI" id="CHEBI:16526"/>
        <dbReference type="ChEBI" id="CHEBI:28938"/>
    </reaction>
</comment>
<comment type="similarity">
    <text evidence="1">Belongs to the AB hydrolase superfamily. Hydrolase RutD family.</text>
</comment>
<feature type="chain" id="PRO_0000402940" description="Putative carbamate hydrolase RutD">
    <location>
        <begin position="1"/>
        <end position="266"/>
    </location>
</feature>
<organism>
    <name type="scientific">Escherichia coli (strain B / BL21-DE3)</name>
    <dbReference type="NCBI Taxonomy" id="469008"/>
    <lineage>
        <taxon>Bacteria</taxon>
        <taxon>Pseudomonadati</taxon>
        <taxon>Pseudomonadota</taxon>
        <taxon>Gammaproteobacteria</taxon>
        <taxon>Enterobacterales</taxon>
        <taxon>Enterobacteriaceae</taxon>
        <taxon>Escherichia</taxon>
    </lineage>
</organism>
<protein>
    <recommendedName>
        <fullName evidence="1">Putative carbamate hydrolase RutD</fullName>
        <ecNumber evidence="1">3.5.1.-</ecNumber>
    </recommendedName>
    <alternativeName>
        <fullName evidence="1">Aminohydrolase</fullName>
    </alternativeName>
</protein>
<sequence>MKLSLSPPPYADAPVVVLISGLGGSGSYWLPQLAVLEQEYQVVCYDQRGTGNNPDTLAEDYSIAQMAAELHQALVAAGIEHYAVVGHALGALVGMQLALDYPASVTVLISVNGWLRINAHTRRCFQVRERLLYSGGAQAWVEAQPLFLYPADWMAARAPRLEAEDALALAHFQGKNNLLRRLNALKRADFSHHADRIRCPVQIICASDDLLVPTACSSELHAALPDSQKMVMPYGGHACNVTDPETFNALLLNGLASLLHHREAAL</sequence>
<proteinExistence type="inferred from homology"/>
<reference key="1">
    <citation type="submission" date="2009-06" db="EMBL/GenBank/DDBJ databases">
        <title>Sequencing and gene expression analysis of Escherichia coli BL21.</title>
        <authorList>
            <person name="Leparc G."/>
            <person name="Striedner G."/>
            <person name="Bayer K."/>
            <person name="Kreil D."/>
            <person name="Krempl P.M."/>
        </authorList>
    </citation>
    <scope>NUCLEOTIDE SEQUENCE [LARGE SCALE GENOMIC DNA]</scope>
    <source>
        <strain>B / BL21-DE3</strain>
    </source>
</reference>
<reference key="2">
    <citation type="submission" date="2009-07" db="EMBL/GenBank/DDBJ databases">
        <title>Complete sequence of Escherichia coli BL21(DE3).</title>
        <authorList>
            <person name="Lucas S."/>
            <person name="Copeland A."/>
            <person name="Lapidus A."/>
            <person name="Glavina del Rio T."/>
            <person name="Dalin E."/>
            <person name="Tice H."/>
            <person name="Bruce D."/>
            <person name="Goodwin L."/>
            <person name="Pitluck S."/>
            <person name="LaButti K.M."/>
            <person name="Clum A."/>
            <person name="Larimer F."/>
            <person name="Land M."/>
            <person name="Hauser L."/>
            <person name="Kyrpides N."/>
            <person name="Anderson I."/>
            <person name="Sorek R."/>
            <person name="Rubin E."/>
        </authorList>
    </citation>
    <scope>NUCLEOTIDE SEQUENCE [LARGE SCALE GENOMIC DNA]</scope>
    <source>
        <strain>B / BL21-DE3</strain>
    </source>
</reference>
<reference key="3">
    <citation type="journal article" date="2009" name="J. Mol. Biol.">
        <title>Genome sequences of Escherichia coli B strains REL606 and BL21(DE3).</title>
        <authorList>
            <person name="Jeong H."/>
            <person name="Barbe V."/>
            <person name="Lee C.H."/>
            <person name="Vallenet D."/>
            <person name="Yu D.S."/>
            <person name="Choi S.H."/>
            <person name="Couloux A."/>
            <person name="Lee S.W."/>
            <person name="Yoon S.H."/>
            <person name="Cattolico L."/>
            <person name="Hur C.G."/>
            <person name="Park H.S."/>
            <person name="Segurens B."/>
            <person name="Kim S.C."/>
            <person name="Oh T.K."/>
            <person name="Lenski R.E."/>
            <person name="Studier F.W."/>
            <person name="Daegelen P."/>
            <person name="Kim J.F."/>
        </authorList>
    </citation>
    <scope>NUCLEOTIDE SEQUENCE [LARGE SCALE GENOMIC DNA]</scope>
    <source>
        <strain>B / BL21-DE3</strain>
    </source>
</reference>
<dbReference type="EC" id="3.5.1.-" evidence="1"/>
<dbReference type="EMBL" id="AM946981">
    <property type="protein sequence ID" value="CAQ31536.1"/>
    <property type="molecule type" value="Genomic_DNA"/>
</dbReference>
<dbReference type="EMBL" id="CP001665">
    <property type="protein sequence ID" value="ACT29607.1"/>
    <property type="molecule type" value="Genomic_DNA"/>
</dbReference>
<dbReference type="EMBL" id="CP001509">
    <property type="protein sequence ID" value="ACT42907.1"/>
    <property type="molecule type" value="Genomic_DNA"/>
</dbReference>
<dbReference type="RefSeq" id="WP_000777653.1">
    <property type="nucleotide sequence ID" value="NZ_JADXDS010000001.1"/>
</dbReference>
<dbReference type="SMR" id="C6EHJ8"/>
<dbReference type="ESTHER" id="ecoli-rutD">
    <property type="family name" value="RutD"/>
</dbReference>
<dbReference type="KEGG" id="ebd:ECBD_2585"/>
<dbReference type="KEGG" id="ebe:B21_01019"/>
<dbReference type="KEGG" id="ebl:ECD_01012"/>
<dbReference type="PATRIC" id="fig|469008.15.peg.1034"/>
<dbReference type="eggNOG" id="COG2021">
    <property type="taxonomic scope" value="Bacteria"/>
</dbReference>
<dbReference type="HOGENOM" id="CLU_020336_50_1_6"/>
<dbReference type="GO" id="GO:0016811">
    <property type="term" value="F:hydrolase activity, acting on carbon-nitrogen (but not peptide) bonds, in linear amides"/>
    <property type="evidence" value="ECO:0007669"/>
    <property type="project" value="InterPro"/>
</dbReference>
<dbReference type="GO" id="GO:0019740">
    <property type="term" value="P:nitrogen utilization"/>
    <property type="evidence" value="ECO:0007669"/>
    <property type="project" value="UniProtKB-UniRule"/>
</dbReference>
<dbReference type="GO" id="GO:0006212">
    <property type="term" value="P:uracil catabolic process"/>
    <property type="evidence" value="ECO:0007669"/>
    <property type="project" value="UniProtKB-UniRule"/>
</dbReference>
<dbReference type="FunFam" id="3.40.50.1820:FF:000052">
    <property type="entry name" value="Putative aminoacrylate hydrolase RutD"/>
    <property type="match status" value="1"/>
</dbReference>
<dbReference type="Gene3D" id="3.40.50.1820">
    <property type="entry name" value="alpha/beta hydrolase"/>
    <property type="match status" value="1"/>
</dbReference>
<dbReference type="HAMAP" id="MF_00832">
    <property type="entry name" value="RutD"/>
    <property type="match status" value="1"/>
</dbReference>
<dbReference type="InterPro" id="IPR000073">
    <property type="entry name" value="AB_hydrolase_1"/>
</dbReference>
<dbReference type="InterPro" id="IPR029058">
    <property type="entry name" value="AB_hydrolase_fold"/>
</dbReference>
<dbReference type="InterPro" id="IPR050266">
    <property type="entry name" value="AB_hydrolase_sf"/>
</dbReference>
<dbReference type="InterPro" id="IPR019913">
    <property type="entry name" value="Pyrimidine_utilisation_RutD"/>
</dbReference>
<dbReference type="NCBIfam" id="TIGR03611">
    <property type="entry name" value="RutD"/>
    <property type="match status" value="1"/>
</dbReference>
<dbReference type="PANTHER" id="PTHR43798">
    <property type="entry name" value="MONOACYLGLYCEROL LIPASE"/>
    <property type="match status" value="1"/>
</dbReference>
<dbReference type="Pfam" id="PF00561">
    <property type="entry name" value="Abhydrolase_1"/>
    <property type="match status" value="1"/>
</dbReference>
<dbReference type="PRINTS" id="PR00111">
    <property type="entry name" value="ABHYDROLASE"/>
</dbReference>
<dbReference type="SUPFAM" id="SSF53474">
    <property type="entry name" value="alpha/beta-Hydrolases"/>
    <property type="match status" value="1"/>
</dbReference>
<name>RUTD_ECOBD</name>
<gene>
    <name evidence="1" type="primary">rutD</name>
    <name type="synonym">rarA</name>
    <name type="ordered locus">ECBD_2585</name>
    <name type="ordered locus">ECD_01012</name>
    <name type="ordered locus">B21_01019</name>
</gene>